<protein>
    <recommendedName>
        <fullName evidence="1">Arginine--tRNA ligase</fullName>
        <ecNumber evidence="1">6.1.1.19</ecNumber>
    </recommendedName>
    <alternativeName>
        <fullName evidence="1">Arginyl-tRNA synthetase</fullName>
        <shortName evidence="1">ArgRS</shortName>
    </alternativeName>
</protein>
<evidence type="ECO:0000255" key="1">
    <source>
        <dbReference type="HAMAP-Rule" id="MF_00123"/>
    </source>
</evidence>
<keyword id="KW-0030">Aminoacyl-tRNA synthetase</keyword>
<keyword id="KW-0067">ATP-binding</keyword>
<keyword id="KW-0963">Cytoplasm</keyword>
<keyword id="KW-0436">Ligase</keyword>
<keyword id="KW-0547">Nucleotide-binding</keyword>
<keyword id="KW-0648">Protein biosynthesis</keyword>
<sequence>MLRRALEEAIAQALKEMGVPARLKVARAPKDKPGDYGVPLFALAKELRKPPQAIAQELKDRLPLPEFVEEAIPVGGYLNFRLRTEALLREALRPKAPFPRRPGVVLVEHTSVNPNKELHVGHLRNIALGDAIARILAYAGREVLVLNYIDDTGRQAAETLFALRHYGLTWDGKEKYDHFAGRAYVRLHQDPEYERLQPAIEEVLHALERGELREEVNRILLAQMATMHALNARYDLLVWESDIVRAGLLQKALALLEQSPHVFRPREGKYAGALVMDASPVIPGLEDPFFVLLRSNGTATYYAKDIAFQFWKMGILEGLRFRPYENPYYPGLRTSAPEGEAYTPKAEETINVIDVRQSHPQALVRAALALAGYPALAEKAHHLAYETVLLEGRQMSGRKGLAVSVDEVLEEATRRARAIVEEKNPDHPDKEEAARMVALGAIRFSMVKTEPKKQIDFRYQEALSFEGDTGPYVQYAHARAHSILRKAGEWGAPDLSQATPYERALALDLLDFEEAVLEAAEEKTPHVLAQYLLDLAASWNAYYNARENGQPATPVLTAPEGLRELRLSLVQSLQRTLATGLDLLGIPAPEVM</sequence>
<reference key="1">
    <citation type="journal article" date="2004" name="Nat. Biotechnol.">
        <title>The genome sequence of the extreme thermophile Thermus thermophilus.</title>
        <authorList>
            <person name="Henne A."/>
            <person name="Brueggemann H."/>
            <person name="Raasch C."/>
            <person name="Wiezer A."/>
            <person name="Hartsch T."/>
            <person name="Liesegang H."/>
            <person name="Johann A."/>
            <person name="Lienard T."/>
            <person name="Gohl O."/>
            <person name="Martinez-Arias R."/>
            <person name="Jacobi C."/>
            <person name="Starkuviene V."/>
            <person name="Schlenczeck S."/>
            <person name="Dencker S."/>
            <person name="Huber R."/>
            <person name="Klenk H.-P."/>
            <person name="Kramer W."/>
            <person name="Merkl R."/>
            <person name="Gottschalk G."/>
            <person name="Fritz H.-J."/>
        </authorList>
    </citation>
    <scope>NUCLEOTIDE SEQUENCE [LARGE SCALE GENOMIC DNA]</scope>
    <source>
        <strain>ATCC BAA-163 / DSM 7039 / HB27</strain>
    </source>
</reference>
<accession>Q72GE2</accession>
<gene>
    <name evidence="1" type="primary">argS</name>
    <name type="ordered locus">TT_C1906</name>
</gene>
<organism>
    <name type="scientific">Thermus thermophilus (strain ATCC BAA-163 / DSM 7039 / HB27)</name>
    <dbReference type="NCBI Taxonomy" id="262724"/>
    <lineage>
        <taxon>Bacteria</taxon>
        <taxon>Thermotogati</taxon>
        <taxon>Deinococcota</taxon>
        <taxon>Deinococci</taxon>
        <taxon>Thermales</taxon>
        <taxon>Thermaceae</taxon>
        <taxon>Thermus</taxon>
    </lineage>
</organism>
<comment type="catalytic activity">
    <reaction evidence="1">
        <text>tRNA(Arg) + L-arginine + ATP = L-arginyl-tRNA(Arg) + AMP + diphosphate</text>
        <dbReference type="Rhea" id="RHEA:20301"/>
        <dbReference type="Rhea" id="RHEA-COMP:9658"/>
        <dbReference type="Rhea" id="RHEA-COMP:9673"/>
        <dbReference type="ChEBI" id="CHEBI:30616"/>
        <dbReference type="ChEBI" id="CHEBI:32682"/>
        <dbReference type="ChEBI" id="CHEBI:33019"/>
        <dbReference type="ChEBI" id="CHEBI:78442"/>
        <dbReference type="ChEBI" id="CHEBI:78513"/>
        <dbReference type="ChEBI" id="CHEBI:456215"/>
        <dbReference type="EC" id="6.1.1.19"/>
    </reaction>
</comment>
<comment type="subunit">
    <text evidence="1">Monomer.</text>
</comment>
<comment type="subcellular location">
    <subcellularLocation>
        <location evidence="1">Cytoplasm</location>
    </subcellularLocation>
</comment>
<comment type="similarity">
    <text evidence="1">Belongs to the class-I aminoacyl-tRNA synthetase family.</text>
</comment>
<feature type="chain" id="PRO_0000242111" description="Arginine--tRNA ligase">
    <location>
        <begin position="1"/>
        <end position="592"/>
    </location>
</feature>
<feature type="short sequence motif" description="'HIGH' region">
    <location>
        <begin position="112"/>
        <end position="122"/>
    </location>
</feature>
<dbReference type="EC" id="6.1.1.19" evidence="1"/>
<dbReference type="EMBL" id="AE017221">
    <property type="protein sequence ID" value="AAS82248.1"/>
    <property type="molecule type" value="Genomic_DNA"/>
</dbReference>
<dbReference type="RefSeq" id="WP_011174258.1">
    <property type="nucleotide sequence ID" value="NC_005835.1"/>
</dbReference>
<dbReference type="SMR" id="Q72GE2"/>
<dbReference type="KEGG" id="tth:TT_C1906"/>
<dbReference type="eggNOG" id="COG0018">
    <property type="taxonomic scope" value="Bacteria"/>
</dbReference>
<dbReference type="HOGENOM" id="CLU_006406_6_1_0"/>
<dbReference type="OrthoDB" id="9805987at2"/>
<dbReference type="Proteomes" id="UP000000592">
    <property type="component" value="Chromosome"/>
</dbReference>
<dbReference type="GO" id="GO:0005737">
    <property type="term" value="C:cytoplasm"/>
    <property type="evidence" value="ECO:0007669"/>
    <property type="project" value="UniProtKB-SubCell"/>
</dbReference>
<dbReference type="GO" id="GO:0004814">
    <property type="term" value="F:arginine-tRNA ligase activity"/>
    <property type="evidence" value="ECO:0007669"/>
    <property type="project" value="UniProtKB-UniRule"/>
</dbReference>
<dbReference type="GO" id="GO:0005524">
    <property type="term" value="F:ATP binding"/>
    <property type="evidence" value="ECO:0007669"/>
    <property type="project" value="UniProtKB-UniRule"/>
</dbReference>
<dbReference type="GO" id="GO:0006420">
    <property type="term" value="P:arginyl-tRNA aminoacylation"/>
    <property type="evidence" value="ECO:0007669"/>
    <property type="project" value="UniProtKB-UniRule"/>
</dbReference>
<dbReference type="CDD" id="cd07956">
    <property type="entry name" value="Anticodon_Ia_Arg"/>
    <property type="match status" value="1"/>
</dbReference>
<dbReference type="FunFam" id="3.40.50.620:FF:000190">
    <property type="entry name" value="Arginine--tRNA ligase"/>
    <property type="match status" value="1"/>
</dbReference>
<dbReference type="Gene3D" id="3.30.1360.70">
    <property type="entry name" value="Arginyl tRNA synthetase N-terminal domain"/>
    <property type="match status" value="1"/>
</dbReference>
<dbReference type="Gene3D" id="3.40.50.620">
    <property type="entry name" value="HUPs"/>
    <property type="match status" value="1"/>
</dbReference>
<dbReference type="Gene3D" id="1.10.730.10">
    <property type="entry name" value="Isoleucyl-tRNA Synthetase, Domain 1"/>
    <property type="match status" value="1"/>
</dbReference>
<dbReference type="HAMAP" id="MF_00123">
    <property type="entry name" value="Arg_tRNA_synth"/>
    <property type="match status" value="1"/>
</dbReference>
<dbReference type="InterPro" id="IPR001412">
    <property type="entry name" value="aa-tRNA-synth_I_CS"/>
</dbReference>
<dbReference type="InterPro" id="IPR001278">
    <property type="entry name" value="Arg-tRNA-ligase"/>
</dbReference>
<dbReference type="InterPro" id="IPR005148">
    <property type="entry name" value="Arg-tRNA-synth_N"/>
</dbReference>
<dbReference type="InterPro" id="IPR036695">
    <property type="entry name" value="Arg-tRNA-synth_N_sf"/>
</dbReference>
<dbReference type="InterPro" id="IPR035684">
    <property type="entry name" value="ArgRS_core"/>
</dbReference>
<dbReference type="InterPro" id="IPR008909">
    <property type="entry name" value="DALR_anticod-bd"/>
</dbReference>
<dbReference type="InterPro" id="IPR014729">
    <property type="entry name" value="Rossmann-like_a/b/a_fold"/>
</dbReference>
<dbReference type="InterPro" id="IPR009080">
    <property type="entry name" value="tRNAsynth_Ia_anticodon-bd"/>
</dbReference>
<dbReference type="NCBIfam" id="NF002447">
    <property type="entry name" value="PRK01611.3-4"/>
    <property type="match status" value="1"/>
</dbReference>
<dbReference type="PANTHER" id="PTHR11956:SF5">
    <property type="entry name" value="ARGININE--TRNA LIGASE, CYTOPLASMIC"/>
    <property type="match status" value="1"/>
</dbReference>
<dbReference type="PANTHER" id="PTHR11956">
    <property type="entry name" value="ARGINYL-TRNA SYNTHETASE"/>
    <property type="match status" value="1"/>
</dbReference>
<dbReference type="Pfam" id="PF03485">
    <property type="entry name" value="Arg_tRNA_synt_N"/>
    <property type="match status" value="1"/>
</dbReference>
<dbReference type="Pfam" id="PF05746">
    <property type="entry name" value="DALR_1"/>
    <property type="match status" value="1"/>
</dbReference>
<dbReference type="Pfam" id="PF00750">
    <property type="entry name" value="tRNA-synt_1d"/>
    <property type="match status" value="2"/>
</dbReference>
<dbReference type="PRINTS" id="PR01038">
    <property type="entry name" value="TRNASYNTHARG"/>
</dbReference>
<dbReference type="SMART" id="SM01016">
    <property type="entry name" value="Arg_tRNA_synt_N"/>
    <property type="match status" value="1"/>
</dbReference>
<dbReference type="SMART" id="SM00836">
    <property type="entry name" value="DALR_1"/>
    <property type="match status" value="1"/>
</dbReference>
<dbReference type="SUPFAM" id="SSF47323">
    <property type="entry name" value="Anticodon-binding domain of a subclass of class I aminoacyl-tRNA synthetases"/>
    <property type="match status" value="1"/>
</dbReference>
<dbReference type="SUPFAM" id="SSF55190">
    <property type="entry name" value="Arginyl-tRNA synthetase (ArgRS), N-terminal 'additional' domain"/>
    <property type="match status" value="1"/>
</dbReference>
<dbReference type="SUPFAM" id="SSF52374">
    <property type="entry name" value="Nucleotidylyl transferase"/>
    <property type="match status" value="1"/>
</dbReference>
<dbReference type="PROSITE" id="PS00178">
    <property type="entry name" value="AA_TRNA_LIGASE_I"/>
    <property type="match status" value="1"/>
</dbReference>
<proteinExistence type="inferred from homology"/>
<name>SYR_THET2</name>